<feature type="chain" id="PRO_0000362767" description="NADH-quinone oxidoreductase subunit A">
    <location>
        <begin position="1"/>
        <end position="147"/>
    </location>
</feature>
<feature type="transmembrane region" description="Helical" evidence="1">
    <location>
        <begin position="16"/>
        <end position="36"/>
    </location>
</feature>
<feature type="transmembrane region" description="Helical" evidence="1">
    <location>
        <begin position="68"/>
        <end position="88"/>
    </location>
</feature>
<feature type="transmembrane region" description="Helical" evidence="1">
    <location>
        <begin position="97"/>
        <end position="117"/>
    </location>
</feature>
<keyword id="KW-0997">Cell inner membrane</keyword>
<keyword id="KW-1003">Cell membrane</keyword>
<keyword id="KW-0472">Membrane</keyword>
<keyword id="KW-0520">NAD</keyword>
<keyword id="KW-0874">Quinone</keyword>
<keyword id="KW-1278">Translocase</keyword>
<keyword id="KW-0812">Transmembrane</keyword>
<keyword id="KW-1133">Transmembrane helix</keyword>
<keyword id="KW-0813">Transport</keyword>
<keyword id="KW-0830">Ubiquinone</keyword>
<gene>
    <name evidence="1" type="primary">nuoA</name>
    <name type="ordered locus">SEN2310</name>
</gene>
<accession>B5R309</accession>
<dbReference type="EC" id="7.1.1.-" evidence="1"/>
<dbReference type="EMBL" id="AM933172">
    <property type="protein sequence ID" value="CAR33894.1"/>
    <property type="molecule type" value="Genomic_DNA"/>
</dbReference>
<dbReference type="RefSeq" id="WP_000062993.1">
    <property type="nucleotide sequence ID" value="NC_011294.1"/>
</dbReference>
<dbReference type="SMR" id="B5R309"/>
<dbReference type="GeneID" id="66756777"/>
<dbReference type="KEGG" id="set:SEN2310"/>
<dbReference type="HOGENOM" id="CLU_119549_2_0_6"/>
<dbReference type="Proteomes" id="UP000000613">
    <property type="component" value="Chromosome"/>
</dbReference>
<dbReference type="GO" id="GO:0030964">
    <property type="term" value="C:NADH dehydrogenase complex"/>
    <property type="evidence" value="ECO:0007669"/>
    <property type="project" value="TreeGrafter"/>
</dbReference>
<dbReference type="GO" id="GO:0005886">
    <property type="term" value="C:plasma membrane"/>
    <property type="evidence" value="ECO:0007669"/>
    <property type="project" value="UniProtKB-SubCell"/>
</dbReference>
<dbReference type="GO" id="GO:0008137">
    <property type="term" value="F:NADH dehydrogenase (ubiquinone) activity"/>
    <property type="evidence" value="ECO:0007669"/>
    <property type="project" value="InterPro"/>
</dbReference>
<dbReference type="GO" id="GO:0050136">
    <property type="term" value="F:NADH:ubiquinone reductase (non-electrogenic) activity"/>
    <property type="evidence" value="ECO:0007669"/>
    <property type="project" value="UniProtKB-UniRule"/>
</dbReference>
<dbReference type="GO" id="GO:0048038">
    <property type="term" value="F:quinone binding"/>
    <property type="evidence" value="ECO:0007669"/>
    <property type="project" value="UniProtKB-KW"/>
</dbReference>
<dbReference type="FunFam" id="1.20.58.1610:FF:000003">
    <property type="entry name" value="NADH-quinone oxidoreductase subunit A"/>
    <property type="match status" value="1"/>
</dbReference>
<dbReference type="Gene3D" id="1.20.58.1610">
    <property type="entry name" value="NADH:ubiquinone/plastoquinone oxidoreductase, chain 3"/>
    <property type="match status" value="1"/>
</dbReference>
<dbReference type="HAMAP" id="MF_01394">
    <property type="entry name" value="NDH1_NuoA"/>
    <property type="match status" value="1"/>
</dbReference>
<dbReference type="InterPro" id="IPR023043">
    <property type="entry name" value="NAD(P)H_OxRDtase_bac/plastid"/>
</dbReference>
<dbReference type="InterPro" id="IPR000440">
    <property type="entry name" value="NADH_UbQ/plastoQ_OxRdtase_su3"/>
</dbReference>
<dbReference type="InterPro" id="IPR038430">
    <property type="entry name" value="NDAH_ubi_oxred_su3_sf"/>
</dbReference>
<dbReference type="PANTHER" id="PTHR11058:SF21">
    <property type="entry name" value="NADH-QUINONE OXIDOREDUCTASE SUBUNIT A"/>
    <property type="match status" value="1"/>
</dbReference>
<dbReference type="PANTHER" id="PTHR11058">
    <property type="entry name" value="NADH-UBIQUINONE OXIDOREDUCTASE CHAIN 3"/>
    <property type="match status" value="1"/>
</dbReference>
<dbReference type="Pfam" id="PF00507">
    <property type="entry name" value="Oxidored_q4"/>
    <property type="match status" value="1"/>
</dbReference>
<name>NUOA_SALEP</name>
<comment type="function">
    <text evidence="1">NDH-1 shuttles electrons from NADH, via FMN and iron-sulfur (Fe-S) centers, to quinones in the respiratory chain. The immediate electron acceptor for the enzyme in this species is believed to be ubiquinone. Couples the redox reaction to proton translocation (for every two electrons transferred, four hydrogen ions are translocated across the cytoplasmic membrane), and thus conserves the redox energy in a proton gradient.</text>
</comment>
<comment type="catalytic activity">
    <reaction evidence="1">
        <text>a quinone + NADH + 5 H(+)(in) = a quinol + NAD(+) + 4 H(+)(out)</text>
        <dbReference type="Rhea" id="RHEA:57888"/>
        <dbReference type="ChEBI" id="CHEBI:15378"/>
        <dbReference type="ChEBI" id="CHEBI:24646"/>
        <dbReference type="ChEBI" id="CHEBI:57540"/>
        <dbReference type="ChEBI" id="CHEBI:57945"/>
        <dbReference type="ChEBI" id="CHEBI:132124"/>
    </reaction>
</comment>
<comment type="subunit">
    <text evidence="1">NDH-1 is composed of 13 different subunits. Subunits NuoA, H, J, K, L, M, N constitute the membrane sector of the complex.</text>
</comment>
<comment type="subcellular location">
    <subcellularLocation>
        <location evidence="1">Cell inner membrane</location>
        <topology evidence="1">Multi-pass membrane protein</topology>
    </subcellularLocation>
</comment>
<comment type="similarity">
    <text evidence="1">Belongs to the complex I subunit 3 family.</text>
</comment>
<proteinExistence type="inferred from homology"/>
<sequence length="147" mass="16493">MSMSTSTEVIAHHWAFAIFLIVAIGLCCLMLVGGWFLGGRARARHKNVPFESGIDSVGTARLRLSAKFYLVAMFFVIFDVEALYLFAWSTSIRESGWVGFVEAAIFIFVLLAGLVYLARIGALDWTPARSRRERMNPETNSIANRQR</sequence>
<reference key="1">
    <citation type="journal article" date="2008" name="Genome Res.">
        <title>Comparative genome analysis of Salmonella enteritidis PT4 and Salmonella gallinarum 287/91 provides insights into evolutionary and host adaptation pathways.</title>
        <authorList>
            <person name="Thomson N.R."/>
            <person name="Clayton D.J."/>
            <person name="Windhorst D."/>
            <person name="Vernikos G."/>
            <person name="Davidson S."/>
            <person name="Churcher C."/>
            <person name="Quail M.A."/>
            <person name="Stevens M."/>
            <person name="Jones M.A."/>
            <person name="Watson M."/>
            <person name="Barron A."/>
            <person name="Layton A."/>
            <person name="Pickard D."/>
            <person name="Kingsley R.A."/>
            <person name="Bignell A."/>
            <person name="Clark L."/>
            <person name="Harris B."/>
            <person name="Ormond D."/>
            <person name="Abdellah Z."/>
            <person name="Brooks K."/>
            <person name="Cherevach I."/>
            <person name="Chillingworth T."/>
            <person name="Woodward J."/>
            <person name="Norberczak H."/>
            <person name="Lord A."/>
            <person name="Arrowsmith C."/>
            <person name="Jagels K."/>
            <person name="Moule S."/>
            <person name="Mungall K."/>
            <person name="Saunders M."/>
            <person name="Whitehead S."/>
            <person name="Chabalgoity J.A."/>
            <person name="Maskell D."/>
            <person name="Humphreys T."/>
            <person name="Roberts M."/>
            <person name="Barrow P.A."/>
            <person name="Dougan G."/>
            <person name="Parkhill J."/>
        </authorList>
    </citation>
    <scope>NUCLEOTIDE SEQUENCE [LARGE SCALE GENOMIC DNA]</scope>
    <source>
        <strain>P125109</strain>
    </source>
</reference>
<evidence type="ECO:0000255" key="1">
    <source>
        <dbReference type="HAMAP-Rule" id="MF_01394"/>
    </source>
</evidence>
<protein>
    <recommendedName>
        <fullName evidence="1">NADH-quinone oxidoreductase subunit A</fullName>
        <ecNumber evidence="1">7.1.1.-</ecNumber>
    </recommendedName>
    <alternativeName>
        <fullName evidence="1">NADH dehydrogenase I subunit A</fullName>
    </alternativeName>
    <alternativeName>
        <fullName evidence="1">NDH-1 subunit A</fullName>
    </alternativeName>
    <alternativeName>
        <fullName evidence="1">NUO1</fullName>
    </alternativeName>
</protein>
<organism>
    <name type="scientific">Salmonella enteritidis PT4 (strain P125109)</name>
    <dbReference type="NCBI Taxonomy" id="550537"/>
    <lineage>
        <taxon>Bacteria</taxon>
        <taxon>Pseudomonadati</taxon>
        <taxon>Pseudomonadota</taxon>
        <taxon>Gammaproteobacteria</taxon>
        <taxon>Enterobacterales</taxon>
        <taxon>Enterobacteriaceae</taxon>
        <taxon>Salmonella</taxon>
    </lineage>
</organism>